<keyword id="KW-1184">Jasmonic acid signaling pathway</keyword>
<keyword id="KW-0539">Nucleus</keyword>
<keyword id="KW-1185">Reference proteome</keyword>
<keyword id="KW-0804">Transcription</keyword>
<keyword id="KW-0805">Transcription regulation</keyword>
<keyword id="KW-0832">Ubl conjugation</keyword>
<sequence length="202" mass="20623">MDAVGAAGGGAMLPAAARRGQPPQPPCMTTAPEQQAAAGGAVIWPAAAAAEAKEKMVVDARTMQLFPTRSADGVVVSPAPAPAAAQERRRPEVHVTPSVPATAPTAPLTIVYGGQVLVFEHYTAEAAEKLVQRTQHLLAAAAGGGGGNKNNNVTVVTPPPDEPPMLLPPPQMPAASGVSAGGVMPIARKASLQRFLQKRKQK</sequence>
<accession>Q94LG1</accession>
<reference key="1">
    <citation type="journal article" date="2005" name="Genome Res.">
        <title>Sequence, annotation, and analysis of synteny between rice chromosome 3 and diverged grass species.</title>
        <authorList>
            <consortium name="The rice chromosome 3 sequencing consortium"/>
            <person name="Buell C.R."/>
            <person name="Yuan Q."/>
            <person name="Ouyang S."/>
            <person name="Liu J."/>
            <person name="Zhu W."/>
            <person name="Wang A."/>
            <person name="Maiti R."/>
            <person name="Haas B."/>
            <person name="Wortman J."/>
            <person name="Pertea M."/>
            <person name="Jones K.M."/>
            <person name="Kim M."/>
            <person name="Overton L."/>
            <person name="Tsitrin T."/>
            <person name="Fadrosh D."/>
            <person name="Bera J."/>
            <person name="Weaver B."/>
            <person name="Jin S."/>
            <person name="Johri S."/>
            <person name="Reardon M."/>
            <person name="Webb K."/>
            <person name="Hill J."/>
            <person name="Moffat K."/>
            <person name="Tallon L."/>
            <person name="Van Aken S."/>
            <person name="Lewis M."/>
            <person name="Utterback T."/>
            <person name="Feldblyum T."/>
            <person name="Zismann V."/>
            <person name="Iobst S."/>
            <person name="Hsiao J."/>
            <person name="de Vazeille A.R."/>
            <person name="Salzberg S.L."/>
            <person name="White O."/>
            <person name="Fraser C.M."/>
            <person name="Yu Y."/>
            <person name="Kim H."/>
            <person name="Rambo T."/>
            <person name="Currie J."/>
            <person name="Collura K."/>
            <person name="Kernodle-Thompson S."/>
            <person name="Wei F."/>
            <person name="Kudrna K."/>
            <person name="Ammiraju J.S.S."/>
            <person name="Luo M."/>
            <person name="Goicoechea J.L."/>
            <person name="Wing R.A."/>
            <person name="Henry D."/>
            <person name="Oates R."/>
            <person name="Palmer M."/>
            <person name="Pries G."/>
            <person name="Saski C."/>
            <person name="Simmons J."/>
            <person name="Soderlund C."/>
            <person name="Nelson W."/>
            <person name="de la Bastide M."/>
            <person name="Spiegel L."/>
            <person name="Nascimento L."/>
            <person name="Huang E."/>
            <person name="Preston R."/>
            <person name="Zutavern T."/>
            <person name="Palmer L."/>
            <person name="O'Shaughnessy A."/>
            <person name="Dike S."/>
            <person name="McCombie W.R."/>
            <person name="Minx P."/>
            <person name="Cordum H."/>
            <person name="Wilson R."/>
            <person name="Jin W."/>
            <person name="Lee H.R."/>
            <person name="Jiang J."/>
            <person name="Jackson S."/>
        </authorList>
    </citation>
    <scope>NUCLEOTIDE SEQUENCE [LARGE SCALE GENOMIC DNA]</scope>
    <source>
        <strain>cv. Nipponbare</strain>
    </source>
</reference>
<reference key="2">
    <citation type="journal article" date="2005" name="Nature">
        <title>The map-based sequence of the rice genome.</title>
        <authorList>
            <consortium name="International rice genome sequencing project (IRGSP)"/>
        </authorList>
    </citation>
    <scope>NUCLEOTIDE SEQUENCE [LARGE SCALE GENOMIC DNA]</scope>
    <source>
        <strain>cv. Nipponbare</strain>
    </source>
</reference>
<reference key="3">
    <citation type="journal article" date="2008" name="Nucleic Acids Res.">
        <title>The rice annotation project database (RAP-DB): 2008 update.</title>
        <authorList>
            <consortium name="The rice annotation project (RAP)"/>
        </authorList>
    </citation>
    <scope>GENOME REANNOTATION</scope>
    <source>
        <strain>cv. Nipponbare</strain>
    </source>
</reference>
<reference key="4">
    <citation type="journal article" date="2013" name="Rice">
        <title>Improvement of the Oryza sativa Nipponbare reference genome using next generation sequence and optical map data.</title>
        <authorList>
            <person name="Kawahara Y."/>
            <person name="de la Bastide M."/>
            <person name="Hamilton J.P."/>
            <person name="Kanamori H."/>
            <person name="McCombie W.R."/>
            <person name="Ouyang S."/>
            <person name="Schwartz D.C."/>
            <person name="Tanaka T."/>
            <person name="Wu J."/>
            <person name="Zhou S."/>
            <person name="Childs K.L."/>
            <person name="Davidson R.M."/>
            <person name="Lin H."/>
            <person name="Quesada-Ocampo L."/>
            <person name="Vaillancourt B."/>
            <person name="Sakai H."/>
            <person name="Lee S.S."/>
            <person name="Kim J."/>
            <person name="Numa H."/>
            <person name="Itoh T."/>
            <person name="Buell C.R."/>
            <person name="Matsumoto T."/>
        </authorList>
    </citation>
    <scope>GENOME REANNOTATION</scope>
    <source>
        <strain>cv. Nipponbare</strain>
    </source>
</reference>
<reference key="5">
    <citation type="journal article" date="2005" name="PLoS Biol.">
        <title>The genomes of Oryza sativa: a history of duplications.</title>
        <authorList>
            <person name="Yu J."/>
            <person name="Wang J."/>
            <person name="Lin W."/>
            <person name="Li S."/>
            <person name="Li H."/>
            <person name="Zhou J."/>
            <person name="Ni P."/>
            <person name="Dong W."/>
            <person name="Hu S."/>
            <person name="Zeng C."/>
            <person name="Zhang J."/>
            <person name="Zhang Y."/>
            <person name="Li R."/>
            <person name="Xu Z."/>
            <person name="Li S."/>
            <person name="Li X."/>
            <person name="Zheng H."/>
            <person name="Cong L."/>
            <person name="Lin L."/>
            <person name="Yin J."/>
            <person name="Geng J."/>
            <person name="Li G."/>
            <person name="Shi J."/>
            <person name="Liu J."/>
            <person name="Lv H."/>
            <person name="Li J."/>
            <person name="Wang J."/>
            <person name="Deng Y."/>
            <person name="Ran L."/>
            <person name="Shi X."/>
            <person name="Wang X."/>
            <person name="Wu Q."/>
            <person name="Li C."/>
            <person name="Ren X."/>
            <person name="Wang J."/>
            <person name="Wang X."/>
            <person name="Li D."/>
            <person name="Liu D."/>
            <person name="Zhang X."/>
            <person name="Ji Z."/>
            <person name="Zhao W."/>
            <person name="Sun Y."/>
            <person name="Zhang Z."/>
            <person name="Bao J."/>
            <person name="Han Y."/>
            <person name="Dong L."/>
            <person name="Ji J."/>
            <person name="Chen P."/>
            <person name="Wu S."/>
            <person name="Liu J."/>
            <person name="Xiao Y."/>
            <person name="Bu D."/>
            <person name="Tan J."/>
            <person name="Yang L."/>
            <person name="Ye C."/>
            <person name="Zhang J."/>
            <person name="Xu J."/>
            <person name="Zhou Y."/>
            <person name="Yu Y."/>
            <person name="Zhang B."/>
            <person name="Zhuang S."/>
            <person name="Wei H."/>
            <person name="Liu B."/>
            <person name="Lei M."/>
            <person name="Yu H."/>
            <person name="Li Y."/>
            <person name="Xu H."/>
            <person name="Wei S."/>
            <person name="He X."/>
            <person name="Fang L."/>
            <person name="Zhang Z."/>
            <person name="Zhang Y."/>
            <person name="Huang X."/>
            <person name="Su Z."/>
            <person name="Tong W."/>
            <person name="Li J."/>
            <person name="Tong Z."/>
            <person name="Li S."/>
            <person name="Ye J."/>
            <person name="Wang L."/>
            <person name="Fang L."/>
            <person name="Lei T."/>
            <person name="Chen C.-S."/>
            <person name="Chen H.-C."/>
            <person name="Xu Z."/>
            <person name="Li H."/>
            <person name="Huang H."/>
            <person name="Zhang F."/>
            <person name="Xu H."/>
            <person name="Li N."/>
            <person name="Zhao C."/>
            <person name="Li S."/>
            <person name="Dong L."/>
            <person name="Huang Y."/>
            <person name="Li L."/>
            <person name="Xi Y."/>
            <person name="Qi Q."/>
            <person name="Li W."/>
            <person name="Zhang B."/>
            <person name="Hu W."/>
            <person name="Zhang Y."/>
            <person name="Tian X."/>
            <person name="Jiao Y."/>
            <person name="Liang X."/>
            <person name="Jin J."/>
            <person name="Gao L."/>
            <person name="Zheng W."/>
            <person name="Hao B."/>
            <person name="Liu S.-M."/>
            <person name="Wang W."/>
            <person name="Yuan L."/>
            <person name="Cao M."/>
            <person name="McDermott J."/>
            <person name="Samudrala R."/>
            <person name="Wang J."/>
            <person name="Wong G.K.-S."/>
            <person name="Yang H."/>
        </authorList>
    </citation>
    <scope>NUCLEOTIDE SEQUENCE [LARGE SCALE GENOMIC DNA]</scope>
    <source>
        <strain>cv. Nipponbare</strain>
    </source>
</reference>
<reference key="6">
    <citation type="journal article" date="2009" name="Plant Mol. Biol.">
        <title>Identification and expression profiling analysis of TIFY family genes involved in stress and phytohormone responses in rice.</title>
        <authorList>
            <person name="Ye H."/>
            <person name="Du H."/>
            <person name="Tang N."/>
            <person name="Li X."/>
            <person name="Xiong L."/>
        </authorList>
    </citation>
    <scope>GENE FAMILY</scope>
    <scope>NOMENCLATURE</scope>
</reference>
<gene>
    <name evidence="6" type="primary">TIFY11G</name>
    <name evidence="6" type="synonym">JAZ15</name>
    <name evidence="10" type="ordered locus">Os03g0396500</name>
    <name evidence="9" type="ordered locus">LOC_Os03g27900</name>
    <name evidence="11" type="ORF">OsJ_11155</name>
    <name evidence="8" type="ORF">OSJNBb0004M10.17</name>
</gene>
<comment type="function">
    <text evidence="1">Repressor of jasmonate responses.</text>
</comment>
<comment type="subcellular location">
    <subcellularLocation>
        <location evidence="4">Nucleus</location>
    </subcellularLocation>
</comment>
<comment type="domain">
    <text evidence="1">The jas domain (185-200) is required for interaction with COI1.</text>
</comment>
<comment type="PTM">
    <text evidence="1">Ubiquitinated. Targeted for degradation by the SCF(COI1) E3 ubiquitin ligase-proteasome pathway during jasmonate signaling.</text>
</comment>
<comment type="similarity">
    <text evidence="7">Belongs to the TIFY/JAZ family.</text>
</comment>
<feature type="chain" id="PRO_0000434863" description="Protein TIFY 11g">
    <location>
        <begin position="1"/>
        <end position="202"/>
    </location>
</feature>
<feature type="domain" description="Tify" evidence="3">
    <location>
        <begin position="101"/>
        <end position="136"/>
    </location>
</feature>
<feature type="region of interest" description="Disordered" evidence="5">
    <location>
        <begin position="1"/>
        <end position="31"/>
    </location>
</feature>
<feature type="short sequence motif" description="Jas" evidence="2">
    <location>
        <begin position="185"/>
        <end position="200"/>
    </location>
</feature>
<feature type="short sequence motif" description="Nuclear localization signal" evidence="4">
    <location>
        <begin position="187"/>
        <end position="194"/>
    </location>
</feature>
<feature type="compositionally biased region" description="Gly residues" evidence="5">
    <location>
        <begin position="1"/>
        <end position="11"/>
    </location>
</feature>
<feature type="compositionally biased region" description="Low complexity" evidence="5">
    <location>
        <begin position="12"/>
        <end position="21"/>
    </location>
</feature>
<dbReference type="EMBL" id="AC079853">
    <property type="protein sequence ID" value="AAK52560.1"/>
    <property type="molecule type" value="Genomic_DNA"/>
</dbReference>
<dbReference type="EMBL" id="DP000009">
    <property type="protein sequence ID" value="ABF96426.1"/>
    <property type="molecule type" value="Genomic_DNA"/>
</dbReference>
<dbReference type="EMBL" id="AP008209">
    <property type="protein sequence ID" value="BAH92188.1"/>
    <property type="molecule type" value="Genomic_DNA"/>
</dbReference>
<dbReference type="EMBL" id="AP014959">
    <property type="status" value="NOT_ANNOTATED_CDS"/>
    <property type="molecule type" value="Genomic_DNA"/>
</dbReference>
<dbReference type="EMBL" id="CM000140">
    <property type="protein sequence ID" value="EAZ27216.1"/>
    <property type="molecule type" value="Genomic_DNA"/>
</dbReference>
<dbReference type="STRING" id="39947.Q94LG1"/>
<dbReference type="PaxDb" id="39947-Q94LG1"/>
<dbReference type="KEGG" id="dosa:Os03g0396500"/>
<dbReference type="InParanoid" id="Q94LG1"/>
<dbReference type="PlantReactome" id="R-OSA-6787011">
    <property type="pathway name" value="Jasmonic acid signaling"/>
</dbReference>
<dbReference type="Proteomes" id="UP000000763">
    <property type="component" value="Chromosome 3"/>
</dbReference>
<dbReference type="Proteomes" id="UP000007752">
    <property type="component" value="Chromosome 3"/>
</dbReference>
<dbReference type="Proteomes" id="UP000059680">
    <property type="component" value="Chromosome 3"/>
</dbReference>
<dbReference type="GO" id="GO:0005634">
    <property type="term" value="C:nucleus"/>
    <property type="evidence" value="ECO:0000318"/>
    <property type="project" value="GO_Central"/>
</dbReference>
<dbReference type="GO" id="GO:0031347">
    <property type="term" value="P:regulation of defense response"/>
    <property type="evidence" value="ECO:0000318"/>
    <property type="project" value="GO_Central"/>
</dbReference>
<dbReference type="GO" id="GO:2000022">
    <property type="term" value="P:regulation of jasmonic acid mediated signaling pathway"/>
    <property type="evidence" value="ECO:0000318"/>
    <property type="project" value="GO_Central"/>
</dbReference>
<dbReference type="GO" id="GO:0009611">
    <property type="term" value="P:response to wounding"/>
    <property type="evidence" value="ECO:0000318"/>
    <property type="project" value="GO_Central"/>
</dbReference>
<dbReference type="InterPro" id="IPR018467">
    <property type="entry name" value="CCT_CS"/>
</dbReference>
<dbReference type="InterPro" id="IPR040390">
    <property type="entry name" value="TIFY/JAZ"/>
</dbReference>
<dbReference type="InterPro" id="IPR010399">
    <property type="entry name" value="Tify_dom"/>
</dbReference>
<dbReference type="PANTHER" id="PTHR33077:SF52">
    <property type="entry name" value="PROTEIN TIFY 11D"/>
    <property type="match status" value="1"/>
</dbReference>
<dbReference type="PANTHER" id="PTHR33077">
    <property type="entry name" value="PROTEIN TIFY 4A-RELATED-RELATED"/>
    <property type="match status" value="1"/>
</dbReference>
<dbReference type="Pfam" id="PF09425">
    <property type="entry name" value="Jas_motif"/>
    <property type="match status" value="1"/>
</dbReference>
<dbReference type="Pfam" id="PF06200">
    <property type="entry name" value="tify"/>
    <property type="match status" value="1"/>
</dbReference>
<dbReference type="PROSITE" id="PS51320">
    <property type="entry name" value="TIFY"/>
    <property type="match status" value="1"/>
</dbReference>
<name>TI11G_ORYSJ</name>
<protein>
    <recommendedName>
        <fullName evidence="7">Protein TIFY 11g</fullName>
        <shortName evidence="6">OsTIFY11g</shortName>
    </recommendedName>
    <alternativeName>
        <fullName evidence="7">Jasmonate ZIM domain-containing protein 15</fullName>
        <shortName evidence="6">OsJAZ15</shortName>
    </alternativeName>
</protein>
<organism>
    <name type="scientific">Oryza sativa subsp. japonica</name>
    <name type="common">Rice</name>
    <dbReference type="NCBI Taxonomy" id="39947"/>
    <lineage>
        <taxon>Eukaryota</taxon>
        <taxon>Viridiplantae</taxon>
        <taxon>Streptophyta</taxon>
        <taxon>Embryophyta</taxon>
        <taxon>Tracheophyta</taxon>
        <taxon>Spermatophyta</taxon>
        <taxon>Magnoliopsida</taxon>
        <taxon>Liliopsida</taxon>
        <taxon>Poales</taxon>
        <taxon>Poaceae</taxon>
        <taxon>BOP clade</taxon>
        <taxon>Oryzoideae</taxon>
        <taxon>Oryzeae</taxon>
        <taxon>Oryzinae</taxon>
        <taxon>Oryza</taxon>
        <taxon>Oryza sativa</taxon>
    </lineage>
</organism>
<evidence type="ECO:0000250" key="1">
    <source>
        <dbReference type="UniProtKB" id="Q7XPM8"/>
    </source>
</evidence>
<evidence type="ECO:0000255" key="2"/>
<evidence type="ECO:0000255" key="3">
    <source>
        <dbReference type="PROSITE-ProRule" id="PRU00650"/>
    </source>
</evidence>
<evidence type="ECO:0000255" key="4">
    <source>
        <dbReference type="PROSITE-ProRule" id="PRU00768"/>
    </source>
</evidence>
<evidence type="ECO:0000256" key="5">
    <source>
        <dbReference type="SAM" id="MobiDB-lite"/>
    </source>
</evidence>
<evidence type="ECO:0000303" key="6">
    <source>
    </source>
</evidence>
<evidence type="ECO:0000305" key="7"/>
<evidence type="ECO:0000312" key="8">
    <source>
        <dbReference type="EMBL" id="AAK52560.1"/>
    </source>
</evidence>
<evidence type="ECO:0000312" key="9">
    <source>
        <dbReference type="EMBL" id="ABF96426.1"/>
    </source>
</evidence>
<evidence type="ECO:0000312" key="10">
    <source>
        <dbReference type="EMBL" id="BAH92188.1"/>
    </source>
</evidence>
<evidence type="ECO:0000312" key="11">
    <source>
        <dbReference type="EMBL" id="EAZ27216.1"/>
    </source>
</evidence>
<proteinExistence type="inferred from homology"/>